<reference key="1">
    <citation type="journal article" date="2007" name="PLoS Genet.">
        <title>Patterns and implications of gene gain and loss in the evolution of Prochlorococcus.</title>
        <authorList>
            <person name="Kettler G.C."/>
            <person name="Martiny A.C."/>
            <person name="Huang K."/>
            <person name="Zucker J."/>
            <person name="Coleman M.L."/>
            <person name="Rodrigue S."/>
            <person name="Chen F."/>
            <person name="Lapidus A."/>
            <person name="Ferriera S."/>
            <person name="Johnson J."/>
            <person name="Steglich C."/>
            <person name="Church G.M."/>
            <person name="Richardson P."/>
            <person name="Chisholm S.W."/>
        </authorList>
    </citation>
    <scope>NUCLEOTIDE SEQUENCE [LARGE SCALE GENOMIC DNA]</scope>
    <source>
        <strain>NATL2A</strain>
    </source>
</reference>
<accession>Q46GQ7</accession>
<keyword id="KW-0963">Cytoplasm</keyword>
<keyword id="KW-0570">Pentose shunt</keyword>
<keyword id="KW-1185">Reference proteome</keyword>
<keyword id="KW-0704">Schiff base</keyword>
<keyword id="KW-0808">Transferase</keyword>
<comment type="function">
    <text evidence="2">Transaldolase is important for the balance of metabolites in the pentose-phosphate pathway.</text>
</comment>
<comment type="catalytic activity">
    <reaction evidence="2">
        <text>D-sedoheptulose 7-phosphate + D-glyceraldehyde 3-phosphate = D-erythrose 4-phosphate + beta-D-fructose 6-phosphate</text>
        <dbReference type="Rhea" id="RHEA:17053"/>
        <dbReference type="ChEBI" id="CHEBI:16897"/>
        <dbReference type="ChEBI" id="CHEBI:57483"/>
        <dbReference type="ChEBI" id="CHEBI:57634"/>
        <dbReference type="ChEBI" id="CHEBI:59776"/>
        <dbReference type="EC" id="2.2.1.2"/>
    </reaction>
</comment>
<comment type="pathway">
    <text evidence="2">Carbohydrate degradation; pentose phosphate pathway; D-glyceraldehyde 3-phosphate and beta-D-fructose 6-phosphate from D-ribose 5-phosphate and D-xylulose 5-phosphate (non-oxidative stage): step 2/3.</text>
</comment>
<comment type="subunit">
    <text evidence="1">Homodimer.</text>
</comment>
<comment type="subcellular location">
    <subcellularLocation>
        <location evidence="2">Cytoplasm</location>
    </subcellularLocation>
</comment>
<comment type="similarity">
    <text evidence="2">Belongs to the transaldolase family. Type 1 subfamily.</text>
</comment>
<protein>
    <recommendedName>
        <fullName evidence="2">Transaldolase</fullName>
        <ecNumber evidence="2">2.2.1.2</ecNumber>
    </recommendedName>
</protein>
<sequence length="332" mass="36505">MESLLSQLSSMTVVVADTGDLEAIKKYHPRDATTNPSLILAAAQMPAYQSLIDQALTTSREMLGTSAAKADVVKEALDELCVVFGKEILKLIPGRVSTEVDARLSFDTDATIEKARKIIAKYNADGISNDRVLIKIASTWEGIKAAEVLEKENIHCNLTLLFNFYQAVACAEAGVTLISPFVGRILDWYKSATGRDSYPATEDPGVVSVTKIFNFFKSNGYKTEVMGASFRNIEEITELAGCDLLTISPKLLQQLNETHMDLPIKLNAQKPLVIEEKIHLDQTSFELMMAGDKMATEKLDDGISGFSKAIDKLENQLNERLELIEGEVALTH</sequence>
<proteinExistence type="inferred from homology"/>
<evidence type="ECO:0000250" key="1"/>
<evidence type="ECO:0000255" key="2">
    <source>
        <dbReference type="HAMAP-Rule" id="MF_00492"/>
    </source>
</evidence>
<gene>
    <name evidence="2" type="primary">tal</name>
    <name type="ordered locus">PMN2A_1851</name>
</gene>
<feature type="chain" id="PRO_0000230960" description="Transaldolase">
    <location>
        <begin position="1"/>
        <end position="332"/>
    </location>
</feature>
<feature type="active site" description="Schiff-base intermediate with substrate" evidence="2">
    <location>
        <position position="135"/>
    </location>
</feature>
<organism>
    <name type="scientific">Prochlorococcus marinus (strain NATL2A)</name>
    <dbReference type="NCBI Taxonomy" id="59920"/>
    <lineage>
        <taxon>Bacteria</taxon>
        <taxon>Bacillati</taxon>
        <taxon>Cyanobacteriota</taxon>
        <taxon>Cyanophyceae</taxon>
        <taxon>Synechococcales</taxon>
        <taxon>Prochlorococcaceae</taxon>
        <taxon>Prochlorococcus</taxon>
    </lineage>
</organism>
<name>TAL_PROMT</name>
<dbReference type="EC" id="2.2.1.2" evidence="2"/>
<dbReference type="EMBL" id="CP000095">
    <property type="protein sequence ID" value="AAZ59339.1"/>
    <property type="molecule type" value="Genomic_DNA"/>
</dbReference>
<dbReference type="RefSeq" id="WP_011294483.1">
    <property type="nucleotide sequence ID" value="NC_007335.2"/>
</dbReference>
<dbReference type="SMR" id="Q46GQ7"/>
<dbReference type="STRING" id="59920.PMN2A_1851"/>
<dbReference type="KEGG" id="pmn:PMN2A_1851"/>
<dbReference type="HOGENOM" id="CLU_047470_0_1_3"/>
<dbReference type="OrthoDB" id="9807051at2"/>
<dbReference type="PhylomeDB" id="Q46GQ7"/>
<dbReference type="UniPathway" id="UPA00115">
    <property type="reaction ID" value="UER00414"/>
</dbReference>
<dbReference type="Proteomes" id="UP000002535">
    <property type="component" value="Chromosome"/>
</dbReference>
<dbReference type="GO" id="GO:0005737">
    <property type="term" value="C:cytoplasm"/>
    <property type="evidence" value="ECO:0007669"/>
    <property type="project" value="UniProtKB-SubCell"/>
</dbReference>
<dbReference type="GO" id="GO:0004801">
    <property type="term" value="F:transaldolase activity"/>
    <property type="evidence" value="ECO:0000250"/>
    <property type="project" value="UniProtKB"/>
</dbReference>
<dbReference type="GO" id="GO:0005975">
    <property type="term" value="P:carbohydrate metabolic process"/>
    <property type="evidence" value="ECO:0007669"/>
    <property type="project" value="InterPro"/>
</dbReference>
<dbReference type="GO" id="GO:0006098">
    <property type="term" value="P:pentose-phosphate shunt"/>
    <property type="evidence" value="ECO:0007669"/>
    <property type="project" value="UniProtKB-UniRule"/>
</dbReference>
<dbReference type="CDD" id="cd00957">
    <property type="entry name" value="Transaldolase_TalAB"/>
    <property type="match status" value="1"/>
</dbReference>
<dbReference type="FunFam" id="3.20.20.70:FF:000002">
    <property type="entry name" value="Transaldolase"/>
    <property type="match status" value="1"/>
</dbReference>
<dbReference type="Gene3D" id="3.20.20.70">
    <property type="entry name" value="Aldolase class I"/>
    <property type="match status" value="1"/>
</dbReference>
<dbReference type="HAMAP" id="MF_00492">
    <property type="entry name" value="Transaldolase_1"/>
    <property type="match status" value="1"/>
</dbReference>
<dbReference type="InterPro" id="IPR013785">
    <property type="entry name" value="Aldolase_TIM"/>
</dbReference>
<dbReference type="InterPro" id="IPR001585">
    <property type="entry name" value="TAL/FSA"/>
</dbReference>
<dbReference type="InterPro" id="IPR004730">
    <property type="entry name" value="Transaldolase_1"/>
</dbReference>
<dbReference type="InterPro" id="IPR018225">
    <property type="entry name" value="Transaldolase_AS"/>
</dbReference>
<dbReference type="NCBIfam" id="NF008965">
    <property type="entry name" value="PRK12309.1"/>
    <property type="match status" value="1"/>
</dbReference>
<dbReference type="NCBIfam" id="TIGR00874">
    <property type="entry name" value="talAB"/>
    <property type="match status" value="1"/>
</dbReference>
<dbReference type="PANTHER" id="PTHR10683">
    <property type="entry name" value="TRANSALDOLASE"/>
    <property type="match status" value="1"/>
</dbReference>
<dbReference type="PANTHER" id="PTHR10683:SF18">
    <property type="entry name" value="TRANSALDOLASE"/>
    <property type="match status" value="1"/>
</dbReference>
<dbReference type="Pfam" id="PF00923">
    <property type="entry name" value="TAL_FSA"/>
    <property type="match status" value="1"/>
</dbReference>
<dbReference type="SUPFAM" id="SSF51569">
    <property type="entry name" value="Aldolase"/>
    <property type="match status" value="1"/>
</dbReference>
<dbReference type="PROSITE" id="PS01054">
    <property type="entry name" value="TRANSALDOLASE_1"/>
    <property type="match status" value="1"/>
</dbReference>
<dbReference type="PROSITE" id="PS00958">
    <property type="entry name" value="TRANSALDOLASE_2"/>
    <property type="match status" value="1"/>
</dbReference>